<keyword id="KW-1185">Reference proteome</keyword>
<keyword id="KW-0687">Ribonucleoprotein</keyword>
<keyword id="KW-0689">Ribosomal protein</keyword>
<keyword id="KW-0694">RNA-binding</keyword>
<keyword id="KW-0699">rRNA-binding</keyword>
<organism>
    <name type="scientific">Tropheryma whipplei (strain Twist)</name>
    <name type="common">Whipple's bacillus</name>
    <dbReference type="NCBI Taxonomy" id="203267"/>
    <lineage>
        <taxon>Bacteria</taxon>
        <taxon>Bacillati</taxon>
        <taxon>Actinomycetota</taxon>
        <taxon>Actinomycetes</taxon>
        <taxon>Micrococcales</taxon>
        <taxon>Tropherymataceae</taxon>
        <taxon>Tropheryma</taxon>
    </lineage>
</organism>
<dbReference type="EMBL" id="AE014184">
    <property type="protein sequence ID" value="AAO44641.1"/>
    <property type="molecule type" value="Genomic_DNA"/>
</dbReference>
<dbReference type="RefSeq" id="WP_011096175.1">
    <property type="nucleotide sequence ID" value="NC_004572.3"/>
</dbReference>
<dbReference type="SMR" id="Q83FZ6"/>
<dbReference type="STRING" id="203267.TWT_544"/>
<dbReference type="GeneID" id="67387993"/>
<dbReference type="KEGG" id="twh:TWT_544"/>
<dbReference type="eggNOG" id="COG0093">
    <property type="taxonomic scope" value="Bacteria"/>
</dbReference>
<dbReference type="HOGENOM" id="CLU_095071_2_1_11"/>
<dbReference type="OrthoDB" id="9806379at2"/>
<dbReference type="Proteomes" id="UP000002200">
    <property type="component" value="Chromosome"/>
</dbReference>
<dbReference type="GO" id="GO:0022625">
    <property type="term" value="C:cytosolic large ribosomal subunit"/>
    <property type="evidence" value="ECO:0007669"/>
    <property type="project" value="TreeGrafter"/>
</dbReference>
<dbReference type="GO" id="GO:0070180">
    <property type="term" value="F:large ribosomal subunit rRNA binding"/>
    <property type="evidence" value="ECO:0007669"/>
    <property type="project" value="TreeGrafter"/>
</dbReference>
<dbReference type="GO" id="GO:0003735">
    <property type="term" value="F:structural constituent of ribosome"/>
    <property type="evidence" value="ECO:0007669"/>
    <property type="project" value="InterPro"/>
</dbReference>
<dbReference type="GO" id="GO:0006412">
    <property type="term" value="P:translation"/>
    <property type="evidence" value="ECO:0007669"/>
    <property type="project" value="UniProtKB-UniRule"/>
</dbReference>
<dbReference type="CDD" id="cd00337">
    <property type="entry name" value="Ribosomal_uL14"/>
    <property type="match status" value="1"/>
</dbReference>
<dbReference type="FunFam" id="2.40.150.20:FF:000001">
    <property type="entry name" value="50S ribosomal protein L14"/>
    <property type="match status" value="1"/>
</dbReference>
<dbReference type="Gene3D" id="2.40.150.20">
    <property type="entry name" value="Ribosomal protein L14"/>
    <property type="match status" value="1"/>
</dbReference>
<dbReference type="HAMAP" id="MF_01367">
    <property type="entry name" value="Ribosomal_uL14"/>
    <property type="match status" value="1"/>
</dbReference>
<dbReference type="InterPro" id="IPR000218">
    <property type="entry name" value="Ribosomal_uL14"/>
</dbReference>
<dbReference type="InterPro" id="IPR005745">
    <property type="entry name" value="Ribosomal_uL14_bac-type"/>
</dbReference>
<dbReference type="InterPro" id="IPR019972">
    <property type="entry name" value="Ribosomal_uL14_CS"/>
</dbReference>
<dbReference type="InterPro" id="IPR036853">
    <property type="entry name" value="Ribosomal_uL14_sf"/>
</dbReference>
<dbReference type="NCBIfam" id="TIGR01067">
    <property type="entry name" value="rplN_bact"/>
    <property type="match status" value="1"/>
</dbReference>
<dbReference type="PANTHER" id="PTHR11761">
    <property type="entry name" value="50S/60S RIBOSOMAL PROTEIN L14/L23"/>
    <property type="match status" value="1"/>
</dbReference>
<dbReference type="PANTHER" id="PTHR11761:SF3">
    <property type="entry name" value="LARGE RIBOSOMAL SUBUNIT PROTEIN UL14M"/>
    <property type="match status" value="1"/>
</dbReference>
<dbReference type="Pfam" id="PF00238">
    <property type="entry name" value="Ribosomal_L14"/>
    <property type="match status" value="1"/>
</dbReference>
<dbReference type="SMART" id="SM01374">
    <property type="entry name" value="Ribosomal_L14"/>
    <property type="match status" value="1"/>
</dbReference>
<dbReference type="SUPFAM" id="SSF50193">
    <property type="entry name" value="Ribosomal protein L14"/>
    <property type="match status" value="1"/>
</dbReference>
<dbReference type="PROSITE" id="PS00049">
    <property type="entry name" value="RIBOSOMAL_L14"/>
    <property type="match status" value="1"/>
</dbReference>
<protein>
    <recommendedName>
        <fullName evidence="1">Large ribosomal subunit protein uL14</fullName>
    </recommendedName>
    <alternativeName>
        <fullName evidence="2">50S ribosomal protein L14</fullName>
    </alternativeName>
</protein>
<comment type="function">
    <text evidence="1">Binds to 23S rRNA. Forms part of two intersubunit bridges in the 70S ribosome.</text>
</comment>
<comment type="subunit">
    <text evidence="1">Part of the 50S ribosomal subunit. Forms a cluster with proteins L3 and L19. In the 70S ribosome, L14 and L19 interact and together make contacts with the 16S rRNA in bridges B5 and B8.</text>
</comment>
<comment type="similarity">
    <text evidence="1">Belongs to the universal ribosomal protein uL14 family.</text>
</comment>
<gene>
    <name evidence="1" type="primary">rplN</name>
    <name type="synonym">twt544</name>
    <name type="ordered locus">TWT_544</name>
</gene>
<evidence type="ECO:0000255" key="1">
    <source>
        <dbReference type="HAMAP-Rule" id="MF_01367"/>
    </source>
</evidence>
<evidence type="ECO:0000305" key="2"/>
<accession>Q83FZ6</accession>
<proteinExistence type="inferred from homology"/>
<sequence>MIQQESRLKVADNTGAKSLSVIRVLGGSNRRFGSLGDVVVASVKDAVPGSSAVKKGDVVKAVIVRSTKEVRRTDGSYIRFDDNAAVILRPDNDPRGTRIFGPVARELRDRKFTRIISLAPEVV</sequence>
<reference key="1">
    <citation type="journal article" date="2003" name="Genome Res.">
        <title>Tropheryma whipplei twist: a human pathogenic Actinobacteria with a reduced genome.</title>
        <authorList>
            <person name="Raoult D."/>
            <person name="Ogata H."/>
            <person name="Audic S."/>
            <person name="Robert C."/>
            <person name="Suhre K."/>
            <person name="Drancourt M."/>
            <person name="Claverie J.-M."/>
        </authorList>
    </citation>
    <scope>NUCLEOTIDE SEQUENCE [LARGE SCALE GENOMIC DNA]</scope>
    <source>
        <strain>Twist</strain>
    </source>
</reference>
<feature type="chain" id="PRO_1000055747" description="Large ribosomal subunit protein uL14">
    <location>
        <begin position="1"/>
        <end position="123"/>
    </location>
</feature>
<name>RL14_TROWT</name>